<accession>Q1JH22</accession>
<comment type="function">
    <text evidence="1">Exhibits a very high intrinsic GTPase hydrolysis rate. Involved in the addition of a carboxymethylaminomethyl (cmnm) group at the wobble position (U34) of certain tRNAs, forming tRNA-cmnm(5)s(2)U34.</text>
</comment>
<comment type="cofactor">
    <cofactor evidence="1">
        <name>K(+)</name>
        <dbReference type="ChEBI" id="CHEBI:29103"/>
    </cofactor>
    <text evidence="1">Binds 1 potassium ion per subunit.</text>
</comment>
<comment type="subunit">
    <text evidence="1">Homodimer. Heterotetramer of two MnmE and two MnmG subunits.</text>
</comment>
<comment type="subcellular location">
    <subcellularLocation>
        <location evidence="1">Cytoplasm</location>
    </subcellularLocation>
</comment>
<comment type="similarity">
    <text evidence="1">Belongs to the TRAFAC class TrmE-Era-EngA-EngB-Septin-like GTPase superfamily. TrmE GTPase family.</text>
</comment>
<reference key="1">
    <citation type="journal article" date="2006" name="Proc. Natl. Acad. Sci. U.S.A.">
        <title>Molecular genetic anatomy of inter- and intraserotype variation in the human bacterial pathogen group A Streptococcus.</title>
        <authorList>
            <person name="Beres S.B."/>
            <person name="Richter E.W."/>
            <person name="Nagiec M.J."/>
            <person name="Sumby P."/>
            <person name="Porcella S.F."/>
            <person name="DeLeo F.R."/>
            <person name="Musser J.M."/>
        </authorList>
    </citation>
    <scope>NUCLEOTIDE SEQUENCE [LARGE SCALE GENOMIC DNA]</scope>
    <source>
        <strain>MGAS10270</strain>
    </source>
</reference>
<keyword id="KW-0963">Cytoplasm</keyword>
<keyword id="KW-0342">GTP-binding</keyword>
<keyword id="KW-0378">Hydrolase</keyword>
<keyword id="KW-0460">Magnesium</keyword>
<keyword id="KW-0479">Metal-binding</keyword>
<keyword id="KW-0547">Nucleotide-binding</keyword>
<keyword id="KW-0630">Potassium</keyword>
<keyword id="KW-0819">tRNA processing</keyword>
<gene>
    <name evidence="1" type="primary">mnmE</name>
    <name evidence="1" type="synonym">trmE</name>
    <name type="ordered locus">MGAS10270_Spy0907</name>
</gene>
<organism>
    <name type="scientific">Streptococcus pyogenes serotype M2 (strain MGAS10270)</name>
    <dbReference type="NCBI Taxonomy" id="370552"/>
    <lineage>
        <taxon>Bacteria</taxon>
        <taxon>Bacillati</taxon>
        <taxon>Bacillota</taxon>
        <taxon>Bacilli</taxon>
        <taxon>Lactobacillales</taxon>
        <taxon>Streptococcaceae</taxon>
        <taxon>Streptococcus</taxon>
    </lineage>
</organism>
<proteinExistence type="inferred from homology"/>
<name>MNME_STRPD</name>
<evidence type="ECO:0000255" key="1">
    <source>
        <dbReference type="HAMAP-Rule" id="MF_00379"/>
    </source>
</evidence>
<protein>
    <recommendedName>
        <fullName evidence="1">tRNA modification GTPase MnmE</fullName>
        <ecNumber evidence="1">3.6.-.-</ecNumber>
    </recommendedName>
</protein>
<sequence length="458" mass="50537">MSITKEFDTITAISTPLGEGAIGIVRLSGTDALAIAQSVFKGKNLEQVASHTINYGHIIDPKTGTIIDEVMVSVMLAPKTFTRENVVEINTHGGIAVTNEILQLLIRQGARMAEPGEFTKRAFLNGRVDLTQAEAVMDIIRAKTDKAMTIAVKQLDGSLSQLINDTRQEILNTLAQVEVNIDYPEYDDVEEMTTALLREKTQEFQSLLENLLRTAKRGKILREGLSTAIIGRPNVGKSSLLNNLLREDKAIVTDIAGTTRDVIEEYVNIKGVPLKLVDTAGIRETDDLVEQIGVERSKKALQEADLVLLVLNASEKLTDQDRALLNLSQDSNRIILLNKTDLEQKIELEQLPDDYIPISVLTNQNINLIEDRINQLFFDNAGLVEQDATYLSNARHISLIEKAVQSLEAVNDGLALGMPVDLLQVDLTRTWEILGEITGDAAPDELITQLFSQFCLGK</sequence>
<dbReference type="EC" id="3.6.-.-" evidence="1"/>
<dbReference type="EMBL" id="CP000260">
    <property type="protein sequence ID" value="ABF33972.1"/>
    <property type="molecule type" value="Genomic_DNA"/>
</dbReference>
<dbReference type="SMR" id="Q1JH22"/>
<dbReference type="KEGG" id="sph:MGAS10270_Spy0907"/>
<dbReference type="HOGENOM" id="CLU_019624_4_1_9"/>
<dbReference type="Proteomes" id="UP000002436">
    <property type="component" value="Chromosome"/>
</dbReference>
<dbReference type="GO" id="GO:0005829">
    <property type="term" value="C:cytosol"/>
    <property type="evidence" value="ECO:0007669"/>
    <property type="project" value="TreeGrafter"/>
</dbReference>
<dbReference type="GO" id="GO:0005525">
    <property type="term" value="F:GTP binding"/>
    <property type="evidence" value="ECO:0007669"/>
    <property type="project" value="UniProtKB-UniRule"/>
</dbReference>
<dbReference type="GO" id="GO:0003924">
    <property type="term" value="F:GTPase activity"/>
    <property type="evidence" value="ECO:0007669"/>
    <property type="project" value="UniProtKB-UniRule"/>
</dbReference>
<dbReference type="GO" id="GO:0046872">
    <property type="term" value="F:metal ion binding"/>
    <property type="evidence" value="ECO:0007669"/>
    <property type="project" value="UniProtKB-KW"/>
</dbReference>
<dbReference type="GO" id="GO:0030488">
    <property type="term" value="P:tRNA methylation"/>
    <property type="evidence" value="ECO:0007669"/>
    <property type="project" value="TreeGrafter"/>
</dbReference>
<dbReference type="GO" id="GO:0002098">
    <property type="term" value="P:tRNA wobble uridine modification"/>
    <property type="evidence" value="ECO:0007669"/>
    <property type="project" value="TreeGrafter"/>
</dbReference>
<dbReference type="CDD" id="cd04164">
    <property type="entry name" value="trmE"/>
    <property type="match status" value="1"/>
</dbReference>
<dbReference type="CDD" id="cd14858">
    <property type="entry name" value="TrmE_N"/>
    <property type="match status" value="1"/>
</dbReference>
<dbReference type="FunFam" id="3.30.1360.120:FF:000003">
    <property type="entry name" value="tRNA modification GTPase MnmE"/>
    <property type="match status" value="1"/>
</dbReference>
<dbReference type="FunFam" id="3.40.50.300:FF:000494">
    <property type="entry name" value="tRNA modification GTPase MnmE"/>
    <property type="match status" value="1"/>
</dbReference>
<dbReference type="Gene3D" id="3.40.50.300">
    <property type="entry name" value="P-loop containing nucleotide triphosphate hydrolases"/>
    <property type="match status" value="1"/>
</dbReference>
<dbReference type="Gene3D" id="3.30.1360.120">
    <property type="entry name" value="Probable tRNA modification gtpase trme, domain 1"/>
    <property type="match status" value="1"/>
</dbReference>
<dbReference type="Gene3D" id="1.20.120.430">
    <property type="entry name" value="tRNA modification GTPase MnmE domain 2"/>
    <property type="match status" value="1"/>
</dbReference>
<dbReference type="HAMAP" id="MF_00379">
    <property type="entry name" value="GTPase_MnmE"/>
    <property type="match status" value="1"/>
</dbReference>
<dbReference type="InterPro" id="IPR031168">
    <property type="entry name" value="G_TrmE"/>
</dbReference>
<dbReference type="InterPro" id="IPR006073">
    <property type="entry name" value="GTP-bd"/>
</dbReference>
<dbReference type="InterPro" id="IPR018948">
    <property type="entry name" value="GTP-bd_TrmE_N"/>
</dbReference>
<dbReference type="InterPro" id="IPR004520">
    <property type="entry name" value="GTPase_MnmE"/>
</dbReference>
<dbReference type="InterPro" id="IPR027368">
    <property type="entry name" value="MnmE_dom2"/>
</dbReference>
<dbReference type="InterPro" id="IPR025867">
    <property type="entry name" value="MnmE_helical"/>
</dbReference>
<dbReference type="InterPro" id="IPR027417">
    <property type="entry name" value="P-loop_NTPase"/>
</dbReference>
<dbReference type="InterPro" id="IPR005225">
    <property type="entry name" value="Small_GTP-bd"/>
</dbReference>
<dbReference type="InterPro" id="IPR027266">
    <property type="entry name" value="TrmE/GcvT_dom1"/>
</dbReference>
<dbReference type="NCBIfam" id="TIGR00450">
    <property type="entry name" value="mnmE_trmE_thdF"/>
    <property type="match status" value="1"/>
</dbReference>
<dbReference type="NCBIfam" id="NF003661">
    <property type="entry name" value="PRK05291.1-3"/>
    <property type="match status" value="1"/>
</dbReference>
<dbReference type="NCBIfam" id="TIGR00231">
    <property type="entry name" value="small_GTP"/>
    <property type="match status" value="1"/>
</dbReference>
<dbReference type="PANTHER" id="PTHR42714">
    <property type="entry name" value="TRNA MODIFICATION GTPASE GTPBP3"/>
    <property type="match status" value="1"/>
</dbReference>
<dbReference type="PANTHER" id="PTHR42714:SF2">
    <property type="entry name" value="TRNA MODIFICATION GTPASE GTPBP3, MITOCHONDRIAL"/>
    <property type="match status" value="1"/>
</dbReference>
<dbReference type="Pfam" id="PF01926">
    <property type="entry name" value="MMR_HSR1"/>
    <property type="match status" value="1"/>
</dbReference>
<dbReference type="Pfam" id="PF12631">
    <property type="entry name" value="MnmE_helical"/>
    <property type="match status" value="1"/>
</dbReference>
<dbReference type="Pfam" id="PF10396">
    <property type="entry name" value="TrmE_N"/>
    <property type="match status" value="1"/>
</dbReference>
<dbReference type="SUPFAM" id="SSF52540">
    <property type="entry name" value="P-loop containing nucleoside triphosphate hydrolases"/>
    <property type="match status" value="1"/>
</dbReference>
<dbReference type="SUPFAM" id="SSF116878">
    <property type="entry name" value="TrmE connector domain"/>
    <property type="match status" value="1"/>
</dbReference>
<dbReference type="PROSITE" id="PS51709">
    <property type="entry name" value="G_TRME"/>
    <property type="match status" value="1"/>
</dbReference>
<feature type="chain" id="PRO_1000048888" description="tRNA modification GTPase MnmE">
    <location>
        <begin position="1"/>
        <end position="458"/>
    </location>
</feature>
<feature type="domain" description="TrmE-type G">
    <location>
        <begin position="224"/>
        <end position="378"/>
    </location>
</feature>
<feature type="binding site" evidence="1">
    <location>
        <position position="26"/>
    </location>
    <ligand>
        <name>(6S)-5-formyl-5,6,7,8-tetrahydrofolate</name>
        <dbReference type="ChEBI" id="CHEBI:57457"/>
    </ligand>
</feature>
<feature type="binding site" evidence="1">
    <location>
        <position position="88"/>
    </location>
    <ligand>
        <name>(6S)-5-formyl-5,6,7,8-tetrahydrofolate</name>
        <dbReference type="ChEBI" id="CHEBI:57457"/>
    </ligand>
</feature>
<feature type="binding site" evidence="1">
    <location>
        <position position="127"/>
    </location>
    <ligand>
        <name>(6S)-5-formyl-5,6,7,8-tetrahydrofolate</name>
        <dbReference type="ChEBI" id="CHEBI:57457"/>
    </ligand>
</feature>
<feature type="binding site" evidence="1">
    <location>
        <begin position="234"/>
        <end position="239"/>
    </location>
    <ligand>
        <name>GTP</name>
        <dbReference type="ChEBI" id="CHEBI:37565"/>
    </ligand>
</feature>
<feature type="binding site" evidence="1">
    <location>
        <position position="234"/>
    </location>
    <ligand>
        <name>K(+)</name>
        <dbReference type="ChEBI" id="CHEBI:29103"/>
    </ligand>
</feature>
<feature type="binding site" evidence="1">
    <location>
        <position position="238"/>
    </location>
    <ligand>
        <name>Mg(2+)</name>
        <dbReference type="ChEBI" id="CHEBI:18420"/>
    </ligand>
</feature>
<feature type="binding site" evidence="1">
    <location>
        <begin position="253"/>
        <end position="259"/>
    </location>
    <ligand>
        <name>GTP</name>
        <dbReference type="ChEBI" id="CHEBI:37565"/>
    </ligand>
</feature>
<feature type="binding site" evidence="1">
    <location>
        <position position="253"/>
    </location>
    <ligand>
        <name>K(+)</name>
        <dbReference type="ChEBI" id="CHEBI:29103"/>
    </ligand>
</feature>
<feature type="binding site" evidence="1">
    <location>
        <position position="255"/>
    </location>
    <ligand>
        <name>K(+)</name>
        <dbReference type="ChEBI" id="CHEBI:29103"/>
    </ligand>
</feature>
<feature type="binding site" evidence="1">
    <location>
        <position position="258"/>
    </location>
    <ligand>
        <name>K(+)</name>
        <dbReference type="ChEBI" id="CHEBI:29103"/>
    </ligand>
</feature>
<feature type="binding site" evidence="1">
    <location>
        <position position="259"/>
    </location>
    <ligand>
        <name>Mg(2+)</name>
        <dbReference type="ChEBI" id="CHEBI:18420"/>
    </ligand>
</feature>
<feature type="binding site" evidence="1">
    <location>
        <begin position="278"/>
        <end position="281"/>
    </location>
    <ligand>
        <name>GTP</name>
        <dbReference type="ChEBI" id="CHEBI:37565"/>
    </ligand>
</feature>
<feature type="binding site" evidence="1">
    <location>
        <position position="458"/>
    </location>
    <ligand>
        <name>(6S)-5-formyl-5,6,7,8-tetrahydrofolate</name>
        <dbReference type="ChEBI" id="CHEBI:57457"/>
    </ligand>
</feature>